<name>RBSD_PROMH</name>
<keyword id="KW-0119">Carbohydrate metabolism</keyword>
<keyword id="KW-0963">Cytoplasm</keyword>
<keyword id="KW-0413">Isomerase</keyword>
<keyword id="KW-1185">Reference proteome</keyword>
<reference key="1">
    <citation type="journal article" date="2008" name="J. Bacteriol.">
        <title>Complete genome sequence of uropathogenic Proteus mirabilis, a master of both adherence and motility.</title>
        <authorList>
            <person name="Pearson M.M."/>
            <person name="Sebaihia M."/>
            <person name="Churcher C."/>
            <person name="Quail M.A."/>
            <person name="Seshasayee A.S."/>
            <person name="Luscombe N.M."/>
            <person name="Abdellah Z."/>
            <person name="Arrosmith C."/>
            <person name="Atkin B."/>
            <person name="Chillingworth T."/>
            <person name="Hauser H."/>
            <person name="Jagels K."/>
            <person name="Moule S."/>
            <person name="Mungall K."/>
            <person name="Norbertczak H."/>
            <person name="Rabbinowitsch E."/>
            <person name="Walker D."/>
            <person name="Whithead S."/>
            <person name="Thomson N.R."/>
            <person name="Rather P.N."/>
            <person name="Parkhill J."/>
            <person name="Mobley H.L.T."/>
        </authorList>
    </citation>
    <scope>NUCLEOTIDE SEQUENCE [LARGE SCALE GENOMIC DNA]</scope>
    <source>
        <strain>HI4320</strain>
    </source>
</reference>
<proteinExistence type="inferred from homology"/>
<feature type="chain" id="PRO_1000187157" description="D-ribose pyranase">
    <location>
        <begin position="1"/>
        <end position="139"/>
    </location>
</feature>
<feature type="active site" description="Proton donor" evidence="1">
    <location>
        <position position="20"/>
    </location>
</feature>
<feature type="binding site" evidence="1">
    <location>
        <position position="28"/>
    </location>
    <ligand>
        <name>substrate</name>
    </ligand>
</feature>
<feature type="binding site" evidence="1">
    <location>
        <position position="106"/>
    </location>
    <ligand>
        <name>substrate</name>
    </ligand>
</feature>
<feature type="binding site" evidence="1">
    <location>
        <begin position="128"/>
        <end position="130"/>
    </location>
    <ligand>
        <name>substrate</name>
    </ligand>
</feature>
<evidence type="ECO:0000255" key="1">
    <source>
        <dbReference type="HAMAP-Rule" id="MF_01661"/>
    </source>
</evidence>
<comment type="function">
    <text evidence="1">Catalyzes the interconversion of beta-pyran and beta-furan forms of D-ribose.</text>
</comment>
<comment type="catalytic activity">
    <reaction evidence="1">
        <text>beta-D-ribopyranose = beta-D-ribofuranose</text>
        <dbReference type="Rhea" id="RHEA:25432"/>
        <dbReference type="ChEBI" id="CHEBI:27476"/>
        <dbReference type="ChEBI" id="CHEBI:47002"/>
        <dbReference type="EC" id="5.4.99.62"/>
    </reaction>
</comment>
<comment type="pathway">
    <text evidence="1">Carbohydrate metabolism; D-ribose degradation; D-ribose 5-phosphate from beta-D-ribopyranose: step 1/2.</text>
</comment>
<comment type="subunit">
    <text evidence="1">Homodecamer.</text>
</comment>
<comment type="subcellular location">
    <subcellularLocation>
        <location evidence="1">Cytoplasm</location>
    </subcellularLocation>
</comment>
<comment type="similarity">
    <text evidence="1">Belongs to the RbsD / FucU family. RbsD subfamily.</text>
</comment>
<gene>
    <name evidence="1" type="primary">rbsD</name>
    <name type="ordered locus">PMI0093</name>
</gene>
<protein>
    <recommendedName>
        <fullName evidence="1">D-ribose pyranase</fullName>
        <ecNumber evidence="1">5.4.99.62</ecNumber>
    </recommendedName>
</protein>
<sequence length="139" mass="15489">MKKGVLLNSSISSVIARLGHTDKITIADAGLPIPSSVERIDLALTQGIPDFMSVLQTITHEMQVEAVMLAIEIKNINPLLFSEITRYLHLLEQQQKKPIEIIYVTHEEFKTQLPDNKAVIRTGECSPYANIVLFSGVTF</sequence>
<accession>B4EU30</accession>
<dbReference type="EC" id="5.4.99.62" evidence="1"/>
<dbReference type="EMBL" id="AM942759">
    <property type="protein sequence ID" value="CAR40350.1"/>
    <property type="molecule type" value="Genomic_DNA"/>
</dbReference>
<dbReference type="RefSeq" id="WP_004245122.1">
    <property type="nucleotide sequence ID" value="NC_010554.1"/>
</dbReference>
<dbReference type="SMR" id="B4EU30"/>
<dbReference type="EnsemblBacteria" id="CAR40350">
    <property type="protein sequence ID" value="CAR40350"/>
    <property type="gene ID" value="PMI0093"/>
</dbReference>
<dbReference type="GeneID" id="6799946"/>
<dbReference type="KEGG" id="pmr:PMI0093"/>
<dbReference type="eggNOG" id="COG1869">
    <property type="taxonomic scope" value="Bacteria"/>
</dbReference>
<dbReference type="HOGENOM" id="CLU_135498_0_0_6"/>
<dbReference type="UniPathway" id="UPA00916">
    <property type="reaction ID" value="UER00888"/>
</dbReference>
<dbReference type="Proteomes" id="UP000008319">
    <property type="component" value="Chromosome"/>
</dbReference>
<dbReference type="GO" id="GO:0005829">
    <property type="term" value="C:cytosol"/>
    <property type="evidence" value="ECO:0007669"/>
    <property type="project" value="TreeGrafter"/>
</dbReference>
<dbReference type="GO" id="GO:0062193">
    <property type="term" value="F:D-ribose pyranase activity"/>
    <property type="evidence" value="ECO:0007669"/>
    <property type="project" value="UniProtKB-EC"/>
</dbReference>
<dbReference type="GO" id="GO:0016872">
    <property type="term" value="F:intramolecular lyase activity"/>
    <property type="evidence" value="ECO:0007669"/>
    <property type="project" value="UniProtKB-UniRule"/>
</dbReference>
<dbReference type="GO" id="GO:0048029">
    <property type="term" value="F:monosaccharide binding"/>
    <property type="evidence" value="ECO:0007669"/>
    <property type="project" value="InterPro"/>
</dbReference>
<dbReference type="GO" id="GO:0019303">
    <property type="term" value="P:D-ribose catabolic process"/>
    <property type="evidence" value="ECO:0007669"/>
    <property type="project" value="UniProtKB-UniRule"/>
</dbReference>
<dbReference type="Gene3D" id="3.40.1650.10">
    <property type="entry name" value="RbsD-like domain"/>
    <property type="match status" value="1"/>
</dbReference>
<dbReference type="HAMAP" id="MF_01661">
    <property type="entry name" value="D_rib_pyranase"/>
    <property type="match status" value="1"/>
</dbReference>
<dbReference type="InterPro" id="IPR023064">
    <property type="entry name" value="D-ribose_pyranase"/>
</dbReference>
<dbReference type="InterPro" id="IPR023750">
    <property type="entry name" value="RbsD-like_sf"/>
</dbReference>
<dbReference type="InterPro" id="IPR007721">
    <property type="entry name" value="RbsD_FucU"/>
</dbReference>
<dbReference type="NCBIfam" id="NF008761">
    <property type="entry name" value="PRK11797.1"/>
    <property type="match status" value="1"/>
</dbReference>
<dbReference type="PANTHER" id="PTHR37831">
    <property type="entry name" value="D-RIBOSE PYRANASE"/>
    <property type="match status" value="1"/>
</dbReference>
<dbReference type="PANTHER" id="PTHR37831:SF1">
    <property type="entry name" value="D-RIBOSE PYRANASE"/>
    <property type="match status" value="1"/>
</dbReference>
<dbReference type="Pfam" id="PF05025">
    <property type="entry name" value="RbsD_FucU"/>
    <property type="match status" value="1"/>
</dbReference>
<dbReference type="SUPFAM" id="SSF102546">
    <property type="entry name" value="RbsD-like"/>
    <property type="match status" value="1"/>
</dbReference>
<organism>
    <name type="scientific">Proteus mirabilis (strain HI4320)</name>
    <dbReference type="NCBI Taxonomy" id="529507"/>
    <lineage>
        <taxon>Bacteria</taxon>
        <taxon>Pseudomonadati</taxon>
        <taxon>Pseudomonadota</taxon>
        <taxon>Gammaproteobacteria</taxon>
        <taxon>Enterobacterales</taxon>
        <taxon>Morganellaceae</taxon>
        <taxon>Proteus</taxon>
    </lineage>
</organism>